<protein>
    <recommendedName>
        <fullName>Uncharacterized protein YdcY</fullName>
    </recommendedName>
</protein>
<keyword id="KW-1185">Reference proteome</keyword>
<sequence length="77" mass="8800">MSHLDEVIARVDAAIEESVIAHMNELLIALSDDAELSREDRYTQQQRLRTAIAHHGRKHKEDMEARHEQLTKGGTIL</sequence>
<name>YDCY_ECO57</name>
<gene>
    <name type="primary">ydcY</name>
    <name type="ordered locus">Z2273</name>
    <name type="ordered locus">ECs2050</name>
</gene>
<accession>P64457</accession>
<accession>P76110</accession>
<feature type="chain" id="PRO_0000168936" description="Uncharacterized protein YdcY">
    <location>
        <begin position="1"/>
        <end position="77"/>
    </location>
</feature>
<feature type="region of interest" description="Disordered" evidence="1">
    <location>
        <begin position="54"/>
        <end position="77"/>
    </location>
</feature>
<feature type="compositionally biased region" description="Basic and acidic residues" evidence="1">
    <location>
        <begin position="59"/>
        <end position="70"/>
    </location>
</feature>
<proteinExistence type="predicted"/>
<dbReference type="EMBL" id="AE005174">
    <property type="protein sequence ID" value="AAG56329.1"/>
    <property type="molecule type" value="Genomic_DNA"/>
</dbReference>
<dbReference type="EMBL" id="BA000007">
    <property type="protein sequence ID" value="BAB35473.1"/>
    <property type="molecule type" value="Genomic_DNA"/>
</dbReference>
<dbReference type="PIR" id="B90885">
    <property type="entry name" value="B90885"/>
</dbReference>
<dbReference type="PIR" id="E85733">
    <property type="entry name" value="E85733"/>
</dbReference>
<dbReference type="RefSeq" id="NP_310077.1">
    <property type="nucleotide sequence ID" value="NC_002695.1"/>
</dbReference>
<dbReference type="RefSeq" id="WP_000018633.1">
    <property type="nucleotide sequence ID" value="NZ_VOAI01000022.1"/>
</dbReference>
<dbReference type="SMR" id="P64457"/>
<dbReference type="STRING" id="155864.Z2273"/>
<dbReference type="GeneID" id="917249"/>
<dbReference type="GeneID" id="93775594"/>
<dbReference type="KEGG" id="ece:Z2273"/>
<dbReference type="KEGG" id="ecs:ECs_2050"/>
<dbReference type="PATRIC" id="fig|386585.9.peg.2151"/>
<dbReference type="eggNOG" id="ENOG5032T8Y">
    <property type="taxonomic scope" value="Bacteria"/>
</dbReference>
<dbReference type="HOGENOM" id="CLU_195139_0_0_6"/>
<dbReference type="OMA" id="HGRQHKE"/>
<dbReference type="Proteomes" id="UP000000558">
    <property type="component" value="Chromosome"/>
</dbReference>
<dbReference type="Proteomes" id="UP000002519">
    <property type="component" value="Chromosome"/>
</dbReference>
<dbReference type="InterPro" id="IPR019671">
    <property type="entry name" value="DUF2526"/>
</dbReference>
<dbReference type="Pfam" id="PF10735">
    <property type="entry name" value="DUF2526"/>
    <property type="match status" value="1"/>
</dbReference>
<reference key="1">
    <citation type="journal article" date="2001" name="Nature">
        <title>Genome sequence of enterohaemorrhagic Escherichia coli O157:H7.</title>
        <authorList>
            <person name="Perna N.T."/>
            <person name="Plunkett G. III"/>
            <person name="Burland V."/>
            <person name="Mau B."/>
            <person name="Glasner J.D."/>
            <person name="Rose D.J."/>
            <person name="Mayhew G.F."/>
            <person name="Evans P.S."/>
            <person name="Gregor J."/>
            <person name="Kirkpatrick H.A."/>
            <person name="Posfai G."/>
            <person name="Hackett J."/>
            <person name="Klink S."/>
            <person name="Boutin A."/>
            <person name="Shao Y."/>
            <person name="Miller L."/>
            <person name="Grotbeck E.J."/>
            <person name="Davis N.W."/>
            <person name="Lim A."/>
            <person name="Dimalanta E.T."/>
            <person name="Potamousis K."/>
            <person name="Apodaca J."/>
            <person name="Anantharaman T.S."/>
            <person name="Lin J."/>
            <person name="Yen G."/>
            <person name="Schwartz D.C."/>
            <person name="Welch R.A."/>
            <person name="Blattner F.R."/>
        </authorList>
    </citation>
    <scope>NUCLEOTIDE SEQUENCE [LARGE SCALE GENOMIC DNA]</scope>
    <source>
        <strain>O157:H7 / EDL933 / ATCC 700927 / EHEC</strain>
    </source>
</reference>
<reference key="2">
    <citation type="journal article" date="2001" name="DNA Res.">
        <title>Complete genome sequence of enterohemorrhagic Escherichia coli O157:H7 and genomic comparison with a laboratory strain K-12.</title>
        <authorList>
            <person name="Hayashi T."/>
            <person name="Makino K."/>
            <person name="Ohnishi M."/>
            <person name="Kurokawa K."/>
            <person name="Ishii K."/>
            <person name="Yokoyama K."/>
            <person name="Han C.-G."/>
            <person name="Ohtsubo E."/>
            <person name="Nakayama K."/>
            <person name="Murata T."/>
            <person name="Tanaka M."/>
            <person name="Tobe T."/>
            <person name="Iida T."/>
            <person name="Takami H."/>
            <person name="Honda T."/>
            <person name="Sasakawa C."/>
            <person name="Ogasawara N."/>
            <person name="Yasunaga T."/>
            <person name="Kuhara S."/>
            <person name="Shiba T."/>
            <person name="Hattori M."/>
            <person name="Shinagawa H."/>
        </authorList>
    </citation>
    <scope>NUCLEOTIDE SEQUENCE [LARGE SCALE GENOMIC DNA]</scope>
    <source>
        <strain>O157:H7 / Sakai / RIMD 0509952 / EHEC</strain>
    </source>
</reference>
<organism>
    <name type="scientific">Escherichia coli O157:H7</name>
    <dbReference type="NCBI Taxonomy" id="83334"/>
    <lineage>
        <taxon>Bacteria</taxon>
        <taxon>Pseudomonadati</taxon>
        <taxon>Pseudomonadota</taxon>
        <taxon>Gammaproteobacteria</taxon>
        <taxon>Enterobacterales</taxon>
        <taxon>Enterobacteriaceae</taxon>
        <taxon>Escherichia</taxon>
    </lineage>
</organism>
<evidence type="ECO:0000256" key="1">
    <source>
        <dbReference type="SAM" id="MobiDB-lite"/>
    </source>
</evidence>